<sequence length="303" mass="33957">MTKIKWLGAFALVFVMLLGGCSLPGLGGASDDTIKIGAQSMTESEIVANMIAQLIEHDTDLNTALVKNLGSNYVQHQAMLGGDIDISATRYSGTDLTSTLGKEAEKDPKKALNIVQNEFQKRFSYKWFDSYGFDNTYAFTVTKKFAEKEHINTVSDLKKNASQYKLGVDNAWLKRKGDGYKGFVSTYGFEFGTTYPMQIGLVYDAVKNGKMDAVLAYSTDGRIKAYDLKILKDDKRFFPPYDCSPVIPEKVLKEHPELEGVINKLIGQIDTETMQELNYEVDGKLKEPSVVAKEFLEKHHYFD</sequence>
<feature type="signal peptide" evidence="1">
    <location>
        <begin position="1"/>
        <end position="20"/>
    </location>
</feature>
<feature type="chain" id="PRO_0000031846" description="Glycine betaine/carnitine/choline-binding protein OpuCC">
    <location>
        <begin position="21"/>
        <end position="303"/>
    </location>
</feature>
<feature type="lipid moiety-binding region" description="N-palmitoyl cysteine" evidence="5">
    <location>
        <position position="21"/>
    </location>
</feature>
<feature type="lipid moiety-binding region" description="S-diacylglycerol cysteine" evidence="5">
    <location>
        <position position="21"/>
    </location>
</feature>
<feature type="sequence conflict" description="In Ref. 1; AAB63770." evidence="5" ref="1">
    <original>QL</original>
    <variation>HV</variation>
    <location>
        <begin position="53"/>
        <end position="54"/>
    </location>
</feature>
<feature type="strand" evidence="6">
    <location>
        <begin position="34"/>
        <end position="41"/>
    </location>
</feature>
<feature type="helix" evidence="6">
    <location>
        <begin position="42"/>
        <end position="58"/>
    </location>
</feature>
<feature type="strand" evidence="6">
    <location>
        <begin position="63"/>
        <end position="69"/>
    </location>
</feature>
<feature type="helix" evidence="6">
    <location>
        <begin position="72"/>
        <end position="80"/>
    </location>
</feature>
<feature type="strand" evidence="6">
    <location>
        <begin position="85"/>
        <end position="91"/>
    </location>
</feature>
<feature type="helix" evidence="6">
    <location>
        <begin position="92"/>
        <end position="97"/>
    </location>
</feature>
<feature type="turn" evidence="7">
    <location>
        <begin position="98"/>
        <end position="100"/>
    </location>
</feature>
<feature type="helix" evidence="6">
    <location>
        <begin position="108"/>
        <end position="123"/>
    </location>
</feature>
<feature type="strand" evidence="6">
    <location>
        <begin position="125"/>
        <end position="127"/>
    </location>
</feature>
<feature type="strand" evidence="6">
    <location>
        <begin position="137"/>
        <end position="142"/>
    </location>
</feature>
<feature type="helix" evidence="6">
    <location>
        <begin position="143"/>
        <end position="149"/>
    </location>
</feature>
<feature type="strand" evidence="6">
    <location>
        <begin position="152"/>
        <end position="154"/>
    </location>
</feature>
<feature type="helix" evidence="6">
    <location>
        <begin position="155"/>
        <end position="163"/>
    </location>
</feature>
<feature type="strand" evidence="6">
    <location>
        <begin position="165"/>
        <end position="168"/>
    </location>
</feature>
<feature type="helix" evidence="6">
    <location>
        <begin position="172"/>
        <end position="174"/>
    </location>
</feature>
<feature type="strand" evidence="6">
    <location>
        <begin position="176"/>
        <end position="179"/>
    </location>
</feature>
<feature type="helix" evidence="6">
    <location>
        <begin position="180"/>
        <end position="187"/>
    </location>
</feature>
<feature type="strand" evidence="6">
    <location>
        <begin position="192"/>
        <end position="196"/>
    </location>
</feature>
<feature type="helix" evidence="6">
    <location>
        <begin position="199"/>
        <end position="201"/>
    </location>
</feature>
<feature type="helix" evidence="6">
    <location>
        <begin position="202"/>
        <end position="207"/>
    </location>
</feature>
<feature type="strand" evidence="6">
    <location>
        <begin position="210"/>
        <end position="217"/>
    </location>
</feature>
<feature type="helix" evidence="6">
    <location>
        <begin position="222"/>
        <end position="225"/>
    </location>
</feature>
<feature type="strand" evidence="6">
    <location>
        <begin position="228"/>
        <end position="230"/>
    </location>
</feature>
<feature type="strand" evidence="6">
    <location>
        <begin position="242"/>
        <end position="248"/>
    </location>
</feature>
<feature type="helix" evidence="6">
    <location>
        <begin position="249"/>
        <end position="254"/>
    </location>
</feature>
<feature type="helix" evidence="6">
    <location>
        <begin position="258"/>
        <end position="263"/>
    </location>
</feature>
<feature type="turn" evidence="6">
    <location>
        <begin position="264"/>
        <end position="267"/>
    </location>
</feature>
<feature type="helix" evidence="6">
    <location>
        <begin position="271"/>
        <end position="282"/>
    </location>
</feature>
<feature type="helix" evidence="6">
    <location>
        <begin position="288"/>
        <end position="298"/>
    </location>
</feature>
<feature type="helix" evidence="6">
    <location>
        <begin position="300"/>
        <end position="302"/>
    </location>
</feature>
<proteinExistence type="evidence at protein level"/>
<accession>O32243</accession>
<accession>O31407</accession>
<reference key="1">
    <citation type="journal article" date="1999" name="Mol. Microbiol.">
        <title>Two evolutionarily closely related ABC transporters mediate the uptake of choline for synthesis of the osmoprotectant glycine betaine in Bacillus subtilis.</title>
        <authorList>
            <person name="Kappes R.M."/>
            <person name="Kempf B."/>
            <person name="Kneip S."/>
            <person name="Boch J."/>
            <person name="Gade J."/>
            <person name="Meier-Wagner J."/>
            <person name="Bremer E."/>
        </authorList>
    </citation>
    <scope>NUCLEOTIDE SEQUENCE [GENOMIC DNA]</scope>
    <scope>FUNCTION</scope>
    <scope>SUBUNIT</scope>
    <scope>SUBCELLULAR LOCATION</scope>
    <source>
        <strain>168 / JH642</strain>
    </source>
</reference>
<reference key="2">
    <citation type="journal article" date="1997" name="Nature">
        <title>The complete genome sequence of the Gram-positive bacterium Bacillus subtilis.</title>
        <authorList>
            <person name="Kunst F."/>
            <person name="Ogasawara N."/>
            <person name="Moszer I."/>
            <person name="Albertini A.M."/>
            <person name="Alloni G."/>
            <person name="Azevedo V."/>
            <person name="Bertero M.G."/>
            <person name="Bessieres P."/>
            <person name="Bolotin A."/>
            <person name="Borchert S."/>
            <person name="Borriss R."/>
            <person name="Boursier L."/>
            <person name="Brans A."/>
            <person name="Braun M."/>
            <person name="Brignell S.C."/>
            <person name="Bron S."/>
            <person name="Brouillet S."/>
            <person name="Bruschi C.V."/>
            <person name="Caldwell B."/>
            <person name="Capuano V."/>
            <person name="Carter N.M."/>
            <person name="Choi S.-K."/>
            <person name="Codani J.-J."/>
            <person name="Connerton I.F."/>
            <person name="Cummings N.J."/>
            <person name="Daniel R.A."/>
            <person name="Denizot F."/>
            <person name="Devine K.M."/>
            <person name="Duesterhoeft A."/>
            <person name="Ehrlich S.D."/>
            <person name="Emmerson P.T."/>
            <person name="Entian K.-D."/>
            <person name="Errington J."/>
            <person name="Fabret C."/>
            <person name="Ferrari E."/>
            <person name="Foulger D."/>
            <person name="Fritz C."/>
            <person name="Fujita M."/>
            <person name="Fujita Y."/>
            <person name="Fuma S."/>
            <person name="Galizzi A."/>
            <person name="Galleron N."/>
            <person name="Ghim S.-Y."/>
            <person name="Glaser P."/>
            <person name="Goffeau A."/>
            <person name="Golightly E.J."/>
            <person name="Grandi G."/>
            <person name="Guiseppi G."/>
            <person name="Guy B.J."/>
            <person name="Haga K."/>
            <person name="Haiech J."/>
            <person name="Harwood C.R."/>
            <person name="Henaut A."/>
            <person name="Hilbert H."/>
            <person name="Holsappel S."/>
            <person name="Hosono S."/>
            <person name="Hullo M.-F."/>
            <person name="Itaya M."/>
            <person name="Jones L.-M."/>
            <person name="Joris B."/>
            <person name="Karamata D."/>
            <person name="Kasahara Y."/>
            <person name="Klaerr-Blanchard M."/>
            <person name="Klein C."/>
            <person name="Kobayashi Y."/>
            <person name="Koetter P."/>
            <person name="Koningstein G."/>
            <person name="Krogh S."/>
            <person name="Kumano M."/>
            <person name="Kurita K."/>
            <person name="Lapidus A."/>
            <person name="Lardinois S."/>
            <person name="Lauber J."/>
            <person name="Lazarevic V."/>
            <person name="Lee S.-M."/>
            <person name="Levine A."/>
            <person name="Liu H."/>
            <person name="Masuda S."/>
            <person name="Mauel C."/>
            <person name="Medigue C."/>
            <person name="Medina N."/>
            <person name="Mellado R.P."/>
            <person name="Mizuno M."/>
            <person name="Moestl D."/>
            <person name="Nakai S."/>
            <person name="Noback M."/>
            <person name="Noone D."/>
            <person name="O'Reilly M."/>
            <person name="Ogawa K."/>
            <person name="Ogiwara A."/>
            <person name="Oudega B."/>
            <person name="Park S.-H."/>
            <person name="Parro V."/>
            <person name="Pohl T.M."/>
            <person name="Portetelle D."/>
            <person name="Porwollik S."/>
            <person name="Prescott A.M."/>
            <person name="Presecan E."/>
            <person name="Pujic P."/>
            <person name="Purnelle B."/>
            <person name="Rapoport G."/>
            <person name="Rey M."/>
            <person name="Reynolds S."/>
            <person name="Rieger M."/>
            <person name="Rivolta C."/>
            <person name="Rocha E."/>
            <person name="Roche B."/>
            <person name="Rose M."/>
            <person name="Sadaie Y."/>
            <person name="Sato T."/>
            <person name="Scanlan E."/>
            <person name="Schleich S."/>
            <person name="Schroeter R."/>
            <person name="Scoffone F."/>
            <person name="Sekiguchi J."/>
            <person name="Sekowska A."/>
            <person name="Seror S.J."/>
            <person name="Serror P."/>
            <person name="Shin B.-S."/>
            <person name="Soldo B."/>
            <person name="Sorokin A."/>
            <person name="Tacconi E."/>
            <person name="Takagi T."/>
            <person name="Takahashi H."/>
            <person name="Takemaru K."/>
            <person name="Takeuchi M."/>
            <person name="Tamakoshi A."/>
            <person name="Tanaka T."/>
            <person name="Terpstra P."/>
            <person name="Tognoni A."/>
            <person name="Tosato V."/>
            <person name="Uchiyama S."/>
            <person name="Vandenbol M."/>
            <person name="Vannier F."/>
            <person name="Vassarotti A."/>
            <person name="Viari A."/>
            <person name="Wambutt R."/>
            <person name="Wedler E."/>
            <person name="Wedler H."/>
            <person name="Weitzenegger T."/>
            <person name="Winters P."/>
            <person name="Wipat A."/>
            <person name="Yamamoto H."/>
            <person name="Yamane K."/>
            <person name="Yasumoto K."/>
            <person name="Yata K."/>
            <person name="Yoshida K."/>
            <person name="Yoshikawa H.-F."/>
            <person name="Zumstein E."/>
            <person name="Yoshikawa H."/>
            <person name="Danchin A."/>
        </authorList>
    </citation>
    <scope>NUCLEOTIDE SEQUENCE [LARGE SCALE GENOMIC DNA]</scope>
    <source>
        <strain>168</strain>
    </source>
</reference>
<reference key="3">
    <citation type="journal article" date="1996" name="J. Bacteriol.">
        <title>Three transport systems for the osmoprotectant glycine betaine operate in Bacillus subtilis: characterization of OpuD.</title>
        <authorList>
            <person name="Kappes R."/>
            <person name="Kempf B."/>
            <person name="Bremer E."/>
        </authorList>
    </citation>
    <scope>FUNCTION IN GLYCINE BETAINE TRANSPORT</scope>
    <source>
        <strain>168 / JH642</strain>
    </source>
</reference>
<reference key="4">
    <citation type="journal article" date="2013" name="Microbiology">
        <title>Involvement of OpcR, a GbsR-type transcriptional regulator, in negative regulation of two evolutionarily closely related choline uptake genes in Bacillus subtilis.</title>
        <authorList>
            <person name="Lee C.H."/>
            <person name="Wu T.Y."/>
            <person name="Shaw G.C."/>
        </authorList>
    </citation>
    <scope>INDUCTION</scope>
    <source>
        <strain>168</strain>
    </source>
</reference>
<gene>
    <name type="primary">opuCC</name>
    <name type="synonym">yvbC</name>
    <name type="ordered locus">BSU33810</name>
</gene>
<name>OPUCC_BACSU</name>
<comment type="function">
    <text evidence="2 4">Member of a high affinity multicomponent binding-protein-dependent transport system for glycine betaine, carnitine, and choline.</text>
</comment>
<comment type="subunit">
    <text evidence="2">The complex is composed of two ATP-binding proteins (OpuCA), two transmembrane proteins (OpuCB and OpuCD) and a solute-binding protein (OpuCC).</text>
</comment>
<comment type="subcellular location">
    <subcellularLocation>
        <location evidence="1 2">Cell membrane</location>
        <topology evidence="1 2">Lipid-anchor</topology>
    </subcellularLocation>
</comment>
<comment type="induction">
    <text evidence="3">Repressed by OpcR.</text>
</comment>
<comment type="similarity">
    <text evidence="5">Belongs to the OsmX family.</text>
</comment>
<comment type="sequence caution" evidence="5">
    <conflict type="erroneous initiation">
        <sequence resource="EMBL-CDS" id="AAB63770"/>
    </conflict>
    <text>Extended N-terminus.</text>
</comment>
<organism>
    <name type="scientific">Bacillus subtilis (strain 168)</name>
    <dbReference type="NCBI Taxonomy" id="224308"/>
    <lineage>
        <taxon>Bacteria</taxon>
        <taxon>Bacillati</taxon>
        <taxon>Bacillota</taxon>
        <taxon>Bacilli</taxon>
        <taxon>Bacillales</taxon>
        <taxon>Bacillaceae</taxon>
        <taxon>Bacillus</taxon>
    </lineage>
</organism>
<keyword id="KW-0002">3D-structure</keyword>
<keyword id="KW-0029">Amino-acid transport</keyword>
<keyword id="KW-1003">Cell membrane</keyword>
<keyword id="KW-0449">Lipoprotein</keyword>
<keyword id="KW-0472">Membrane</keyword>
<keyword id="KW-0564">Palmitate</keyword>
<keyword id="KW-1185">Reference proteome</keyword>
<keyword id="KW-0732">Signal</keyword>
<keyword id="KW-0813">Transport</keyword>
<evidence type="ECO:0000255" key="1">
    <source>
        <dbReference type="PROSITE-ProRule" id="PRU00303"/>
    </source>
</evidence>
<evidence type="ECO:0000269" key="2">
    <source>
    </source>
</evidence>
<evidence type="ECO:0000269" key="3">
    <source>
    </source>
</evidence>
<evidence type="ECO:0000269" key="4">
    <source>
    </source>
</evidence>
<evidence type="ECO:0000305" key="5"/>
<evidence type="ECO:0007829" key="6">
    <source>
        <dbReference type="PDB" id="3PPQ"/>
    </source>
</evidence>
<evidence type="ECO:0007829" key="7">
    <source>
        <dbReference type="PDB" id="3PPR"/>
    </source>
</evidence>
<dbReference type="EMBL" id="AF009352">
    <property type="protein sequence ID" value="AAB63770.1"/>
    <property type="status" value="ALT_INIT"/>
    <property type="molecule type" value="Genomic_DNA"/>
</dbReference>
<dbReference type="EMBL" id="AL009126">
    <property type="protein sequence ID" value="CAB15386.1"/>
    <property type="molecule type" value="Genomic_DNA"/>
</dbReference>
<dbReference type="PIR" id="E69670">
    <property type="entry name" value="E69670"/>
</dbReference>
<dbReference type="RefSeq" id="NP_391261.1">
    <property type="nucleotide sequence ID" value="NC_000964.3"/>
</dbReference>
<dbReference type="RefSeq" id="WP_003228350.1">
    <property type="nucleotide sequence ID" value="NZ_OZ025638.1"/>
</dbReference>
<dbReference type="PDB" id="3PPN">
    <property type="method" value="X-ray"/>
    <property type="resolution" value="2.30 A"/>
    <property type="chains" value="A/B=1-303"/>
</dbReference>
<dbReference type="PDB" id="3PPO">
    <property type="method" value="X-ray"/>
    <property type="resolution" value="2.70 A"/>
    <property type="chains" value="A/B=1-303"/>
</dbReference>
<dbReference type="PDB" id="3PPP">
    <property type="method" value="X-ray"/>
    <property type="resolution" value="2.40 A"/>
    <property type="chains" value="A/B=1-303"/>
</dbReference>
<dbReference type="PDB" id="3PPQ">
    <property type="method" value="X-ray"/>
    <property type="resolution" value="1.91 A"/>
    <property type="chains" value="A/B=1-303"/>
</dbReference>
<dbReference type="PDB" id="3PPR">
    <property type="method" value="X-ray"/>
    <property type="resolution" value="2.10 A"/>
    <property type="chains" value="A/B=1-303"/>
</dbReference>
<dbReference type="PDBsum" id="3PPN"/>
<dbReference type="PDBsum" id="3PPO"/>
<dbReference type="PDBsum" id="3PPP"/>
<dbReference type="PDBsum" id="3PPQ"/>
<dbReference type="PDBsum" id="3PPR"/>
<dbReference type="SMR" id="O32243"/>
<dbReference type="FunCoup" id="O32243">
    <property type="interactions" value="182"/>
</dbReference>
<dbReference type="STRING" id="224308.BSU33810"/>
<dbReference type="TCDB" id="3.A.1.12.4">
    <property type="family name" value="the atp-binding cassette (abc) superfamily"/>
</dbReference>
<dbReference type="PaxDb" id="224308-BSU33810"/>
<dbReference type="EnsemblBacteria" id="CAB15386">
    <property type="protein sequence ID" value="CAB15386"/>
    <property type="gene ID" value="BSU_33810"/>
</dbReference>
<dbReference type="GeneID" id="936248"/>
<dbReference type="KEGG" id="bsu:BSU33810"/>
<dbReference type="PATRIC" id="fig|224308.43.peg.3544"/>
<dbReference type="eggNOG" id="COG1732">
    <property type="taxonomic scope" value="Bacteria"/>
</dbReference>
<dbReference type="InParanoid" id="O32243"/>
<dbReference type="OrthoDB" id="9801163at2"/>
<dbReference type="PhylomeDB" id="O32243"/>
<dbReference type="BioCyc" id="BSUB:BSU33810-MONOMER"/>
<dbReference type="BRENDA" id="7.6.2.9">
    <property type="organism ID" value="658"/>
</dbReference>
<dbReference type="EvolutionaryTrace" id="O32243"/>
<dbReference type="Proteomes" id="UP000001570">
    <property type="component" value="Chromosome"/>
</dbReference>
<dbReference type="GO" id="GO:0043190">
    <property type="term" value="C:ATP-binding cassette (ABC) transporter complex"/>
    <property type="evidence" value="ECO:0007669"/>
    <property type="project" value="InterPro"/>
</dbReference>
<dbReference type="GO" id="GO:0022857">
    <property type="term" value="F:transmembrane transporter activity"/>
    <property type="evidence" value="ECO:0007669"/>
    <property type="project" value="InterPro"/>
</dbReference>
<dbReference type="GO" id="GO:0006865">
    <property type="term" value="P:amino acid transport"/>
    <property type="evidence" value="ECO:0007669"/>
    <property type="project" value="UniProtKB-KW"/>
</dbReference>
<dbReference type="CDD" id="cd13608">
    <property type="entry name" value="PBP2_OpuCC_like"/>
    <property type="match status" value="1"/>
</dbReference>
<dbReference type="Gene3D" id="3.40.190.120">
    <property type="entry name" value="Osmoprotection protein (prox), domain 2"/>
    <property type="match status" value="1"/>
</dbReference>
<dbReference type="Gene3D" id="3.40.190.10">
    <property type="entry name" value="Periplasmic binding protein-like II"/>
    <property type="match status" value="1"/>
</dbReference>
<dbReference type="InterPro" id="IPR007210">
    <property type="entry name" value="ABC_Gly_betaine_transp_sub-bd"/>
</dbReference>
<dbReference type="PANTHER" id="PTHR30024">
    <property type="entry name" value="ALIPHATIC SULFONATES-BINDING PROTEIN-RELATED"/>
    <property type="match status" value="1"/>
</dbReference>
<dbReference type="PANTHER" id="PTHR30024:SF44">
    <property type="entry name" value="CHOLINE-BINDING PROTEIN"/>
    <property type="match status" value="1"/>
</dbReference>
<dbReference type="Pfam" id="PF04069">
    <property type="entry name" value="OpuAC"/>
    <property type="match status" value="1"/>
</dbReference>
<dbReference type="SUPFAM" id="SSF53850">
    <property type="entry name" value="Periplasmic binding protein-like II"/>
    <property type="match status" value="1"/>
</dbReference>
<dbReference type="PROSITE" id="PS51257">
    <property type="entry name" value="PROKAR_LIPOPROTEIN"/>
    <property type="match status" value="1"/>
</dbReference>
<protein>
    <recommendedName>
        <fullName>Glycine betaine/carnitine/choline-binding protein OpuCC</fullName>
    </recommendedName>
    <alternativeName>
        <fullName>Osmoprotectant-binding protein</fullName>
    </alternativeName>
</protein>